<evidence type="ECO:0000255" key="1"/>
<evidence type="ECO:0000256" key="2">
    <source>
        <dbReference type="SAM" id="MobiDB-lite"/>
    </source>
</evidence>
<evidence type="ECO:0000269" key="3">
    <source>
    </source>
</evidence>
<reference key="1">
    <citation type="journal article" date="2004" name="Science">
        <title>The 1.2-megabase genome sequence of Mimivirus.</title>
        <authorList>
            <person name="Raoult D."/>
            <person name="Audic S."/>
            <person name="Robert C."/>
            <person name="Abergel C."/>
            <person name="Renesto P."/>
            <person name="Ogata H."/>
            <person name="La Scola B."/>
            <person name="Susan M."/>
            <person name="Claverie J.-M."/>
        </authorList>
    </citation>
    <scope>NUCLEOTIDE SEQUENCE [LARGE SCALE GENOMIC DNA]</scope>
    <source>
        <strain>Rowbotham-Bradford</strain>
    </source>
</reference>
<reference key="2">
    <citation type="journal article" date="2006" name="J. Virol.">
        <title>Mimivirus giant particles incorporate a large fraction of anonymous and unique gene products.</title>
        <authorList>
            <person name="Renesto P."/>
            <person name="Abergel C."/>
            <person name="Decloquement P."/>
            <person name="Moinier D."/>
            <person name="Azza S."/>
            <person name="Ogata H."/>
            <person name="Fourquet P."/>
            <person name="Gorvel J.-P."/>
            <person name="Claverie J.-M."/>
            <person name="Raoult D."/>
        </authorList>
    </citation>
    <scope>IDENTIFICATION BY MASS SPECTROMETRY [LARGE SCALE ANALYSIS]</scope>
    <scope>SUBCELLULAR LOCATION</scope>
</reference>
<organismHost>
    <name type="scientific">Acanthamoeba polyphaga</name>
    <name type="common">Amoeba</name>
    <dbReference type="NCBI Taxonomy" id="5757"/>
</organismHost>
<keyword id="KW-0175">Coiled coil</keyword>
<keyword id="KW-1185">Reference proteome</keyword>
<keyword id="KW-0677">Repeat</keyword>
<keyword id="KW-0946">Virion</keyword>
<keyword id="KW-0853">WD repeat</keyword>
<protein>
    <recommendedName>
        <fullName>Uncharacterized WD repeat-containing protein L264</fullName>
    </recommendedName>
</protein>
<gene>
    <name type="ordered locus">MIMI_L264</name>
</gene>
<dbReference type="EMBL" id="AY653733">
    <property type="protein sequence ID" value="AAV50536.1"/>
    <property type="molecule type" value="Genomic_DNA"/>
</dbReference>
<dbReference type="SMR" id="Q5UPU7"/>
<dbReference type="KEGG" id="vg:9924873"/>
<dbReference type="Proteomes" id="UP000001134">
    <property type="component" value="Genome"/>
</dbReference>
<dbReference type="GO" id="GO:0044423">
    <property type="term" value="C:virion component"/>
    <property type="evidence" value="ECO:0007669"/>
    <property type="project" value="UniProtKB-KW"/>
</dbReference>
<dbReference type="InterPro" id="IPR052918">
    <property type="entry name" value="Motility_Chemotaxis_Reg"/>
</dbReference>
<dbReference type="InterPro" id="IPR011047">
    <property type="entry name" value="Quinoprotein_ADH-like_sf"/>
</dbReference>
<dbReference type="PANTHER" id="PTHR35580">
    <property type="entry name" value="CELL SURFACE GLYCOPROTEIN (S-LAYER PROTEIN)-LIKE PROTEIN"/>
    <property type="match status" value="1"/>
</dbReference>
<dbReference type="PANTHER" id="PTHR35580:SF1">
    <property type="entry name" value="PHYTASE-LIKE DOMAIN-CONTAINING PROTEIN"/>
    <property type="match status" value="1"/>
</dbReference>
<dbReference type="SUPFAM" id="SSF50998">
    <property type="entry name" value="Quinoprotein alcohol dehydrogenase-like"/>
    <property type="match status" value="1"/>
</dbReference>
<dbReference type="SUPFAM" id="SSF63825">
    <property type="entry name" value="YWTD domain"/>
    <property type="match status" value="1"/>
</dbReference>
<proteinExistence type="evidence at protein level"/>
<accession>Q5UPU7</accession>
<organism>
    <name type="scientific">Acanthamoeba polyphaga mimivirus</name>
    <name type="common">APMV</name>
    <dbReference type="NCBI Taxonomy" id="212035"/>
    <lineage>
        <taxon>Viruses</taxon>
        <taxon>Varidnaviria</taxon>
        <taxon>Bamfordvirae</taxon>
        <taxon>Nucleocytoviricota</taxon>
        <taxon>Megaviricetes</taxon>
        <taxon>Imitervirales</taxon>
        <taxon>Mimiviridae</taxon>
        <taxon>Megamimivirinae</taxon>
        <taxon>Mimivirus</taxon>
        <taxon>Mimivirus bradfordmassiliense</taxon>
    </lineage>
</organism>
<feature type="chain" id="PRO_0000247249" description="Uncharacterized WD repeat-containing protein L264">
    <location>
        <begin position="1"/>
        <end position="1389"/>
    </location>
</feature>
<feature type="repeat" description="WD 1">
    <location>
        <begin position="867"/>
        <end position="907"/>
    </location>
</feature>
<feature type="repeat" description="WD 2">
    <location>
        <begin position="1017"/>
        <end position="1056"/>
    </location>
</feature>
<feature type="repeat" description="WD 3">
    <location>
        <begin position="1115"/>
        <end position="1156"/>
    </location>
</feature>
<feature type="region of interest" description="Disordered" evidence="2">
    <location>
        <begin position="294"/>
        <end position="353"/>
    </location>
</feature>
<feature type="coiled-coil region" evidence="1">
    <location>
        <begin position="43"/>
        <end position="94"/>
    </location>
</feature>
<feature type="compositionally biased region" description="Low complexity" evidence="2">
    <location>
        <begin position="304"/>
        <end position="314"/>
    </location>
</feature>
<feature type="compositionally biased region" description="Low complexity" evidence="2">
    <location>
        <begin position="322"/>
        <end position="335"/>
    </location>
</feature>
<comment type="subcellular location">
    <subcellularLocation>
        <location evidence="3">Virion</location>
    </subcellularLocation>
</comment>
<name>YL264_MIMIV</name>
<sequence>MNRNIRRVRREVDSYIPSNNVNVETEGYLIRRIPKKCKPKVTSTIAQRVSQLENEVAEINVALAEHVNELNSQEKRIDKLEKTVKKKKSNCSDDSECSECSECSERSCCSKCNSNKCCCNNTCGVFPNSVEAFSYYGPISGNCGPFPGGNCGPFPGGPCGPFAGGNCGPFSGGSCGPFPGGPCGPIPGGNCGPIPGGPCGPISGGPCGPISGGSCGPALPYSAAVDGYEYFQNGPMMSCPPIGPMGPNGFVEEQFVGGNGPFIGGGGFIGPNNGFVEESWGNCNDCRRGKCKKHKNRRSKSDNSDLSEYSSSNSDDSECTDSDGSSCSTDGSPDCTESENTESHRSHGKKKHRFVNKKRNTCNNSDNKDNSRINMNICDLLKLFGDKCPIKIDPNEECKQVPNEFIQIKCCQEQICCQNSCCANKNSCCTDNCCPKTKCCEKDDTNSYTIEWQKSPDCCKEIDYCEKPFSCETNYCGNSYETDYCPIYIKPDSINSNNYTNSSEKYQYNHYDSDNCSDNYSDNYSDNDSEKVYNINLDATNINTDPNYNHNFNNNHNFNNNFTNNRMTDYSTDYISHNFNPGNNQYSQQISHEQNINQQQSQNSENLLDNNEYGDYENYYNMLRGDQNIFPVNNSSNFNQYESTDISNNQNFNSQIVDSIIDTNHNKDSIQVEFSNNNDKTHHEKNECHCHEHSQPCKTTSIVPFGTPIVDCNNCRNEECITIIQTDSSCSSNKVPIIQPIEPETKTMSIIDTAIANIDTCTDLTLINQPKGISTDAAILWAAKIGNLNMNQGMKVTTDSNNNIIVAGFYRADVTPEPSNDDVPPTVIYDSKGCGVKNITASGIEEIFIVKYDMYGNFLWFAKIESTFTDFTVSIAVDTEDNVIVTGSFTDSAVNIYDSTSQLVKHIPQPIPEPSAEITQSFIVKYSPAGIYQWTAVLFTSGIAVIKSVTTDPNNNIYITGYYGGQTLTFQNSDGTDSYSLGANSLTNVFVAAYNYLGFVLWVTMCGNIGNTVSEQGYNEGLDIKYSPDQTIVVSGYYNTNPLIIYDGPDGLTPSGISLTNVNNTNINITGNDINTTPDIFLIKFRLNGTALWATKISGTITQFNTSVWASEFSGISNQFYTTIAIDPDANIIITGTYNQGPVQIFNTPSGTILSTINLIITGTISTYIIKYGPRGNAIWATRISGALSQVSNGIATDSDSNIIVSGYFSAPVTVFYSSDGTTPFTLENVSEISAFTVKYDRCGNALWAVKQENNGITQALNVAVDNNDSVVIVGTFNQAPINFYNSNKQMAKCIINDSSYDGYVAKYADFVQSLVLLPGCKQKDIAINESCYKRANTLVTYKAGTISNSVSNCLRGFLMTRANSSIKLLPNGNNWLVDYSNNILFIYP</sequence>